<reference key="1">
    <citation type="journal article" date="2005" name="Nature">
        <title>The genome of the social amoeba Dictyostelium discoideum.</title>
        <authorList>
            <person name="Eichinger L."/>
            <person name="Pachebat J.A."/>
            <person name="Gloeckner G."/>
            <person name="Rajandream M.A."/>
            <person name="Sucgang R."/>
            <person name="Berriman M."/>
            <person name="Song J."/>
            <person name="Olsen R."/>
            <person name="Szafranski K."/>
            <person name="Xu Q."/>
            <person name="Tunggal B."/>
            <person name="Kummerfeld S."/>
            <person name="Madera M."/>
            <person name="Konfortov B.A."/>
            <person name="Rivero F."/>
            <person name="Bankier A.T."/>
            <person name="Lehmann R."/>
            <person name="Hamlin N."/>
            <person name="Davies R."/>
            <person name="Gaudet P."/>
            <person name="Fey P."/>
            <person name="Pilcher K."/>
            <person name="Chen G."/>
            <person name="Saunders D."/>
            <person name="Sodergren E.J."/>
            <person name="Davis P."/>
            <person name="Kerhornou A."/>
            <person name="Nie X."/>
            <person name="Hall N."/>
            <person name="Anjard C."/>
            <person name="Hemphill L."/>
            <person name="Bason N."/>
            <person name="Farbrother P."/>
            <person name="Desany B."/>
            <person name="Just E."/>
            <person name="Morio T."/>
            <person name="Rost R."/>
            <person name="Churcher C.M."/>
            <person name="Cooper J."/>
            <person name="Haydock S."/>
            <person name="van Driessche N."/>
            <person name="Cronin A."/>
            <person name="Goodhead I."/>
            <person name="Muzny D.M."/>
            <person name="Mourier T."/>
            <person name="Pain A."/>
            <person name="Lu M."/>
            <person name="Harper D."/>
            <person name="Lindsay R."/>
            <person name="Hauser H."/>
            <person name="James K.D."/>
            <person name="Quiles M."/>
            <person name="Madan Babu M."/>
            <person name="Saito T."/>
            <person name="Buchrieser C."/>
            <person name="Wardroper A."/>
            <person name="Felder M."/>
            <person name="Thangavelu M."/>
            <person name="Johnson D."/>
            <person name="Knights A."/>
            <person name="Loulseged H."/>
            <person name="Mungall K.L."/>
            <person name="Oliver K."/>
            <person name="Price C."/>
            <person name="Quail M.A."/>
            <person name="Urushihara H."/>
            <person name="Hernandez J."/>
            <person name="Rabbinowitsch E."/>
            <person name="Steffen D."/>
            <person name="Sanders M."/>
            <person name="Ma J."/>
            <person name="Kohara Y."/>
            <person name="Sharp S."/>
            <person name="Simmonds M.N."/>
            <person name="Spiegler S."/>
            <person name="Tivey A."/>
            <person name="Sugano S."/>
            <person name="White B."/>
            <person name="Walker D."/>
            <person name="Woodward J.R."/>
            <person name="Winckler T."/>
            <person name="Tanaka Y."/>
            <person name="Shaulsky G."/>
            <person name="Schleicher M."/>
            <person name="Weinstock G.M."/>
            <person name="Rosenthal A."/>
            <person name="Cox E.C."/>
            <person name="Chisholm R.L."/>
            <person name="Gibbs R.A."/>
            <person name="Loomis W.F."/>
            <person name="Platzer M."/>
            <person name="Kay R.R."/>
            <person name="Williams J.G."/>
            <person name="Dear P.H."/>
            <person name="Noegel A.A."/>
            <person name="Barrell B.G."/>
            <person name="Kuspa A."/>
        </authorList>
    </citation>
    <scope>NUCLEOTIDE SEQUENCE [LARGE SCALE GENOMIC DNA]</scope>
    <source>
        <strain>AX4</strain>
    </source>
</reference>
<name>Y2099_DICDI</name>
<sequence length="63" mass="7566">MTILKTINNLNIFNSKIKININQNEIAYELEHKSIYTKNSFSKAGDIMDFYSWRDKNYPYITR</sequence>
<feature type="chain" id="PRO_0000348087" description="Putative uncharacterized protein DDB_G0268300">
    <location>
        <begin position="1"/>
        <end position="63"/>
    </location>
</feature>
<proteinExistence type="predicted"/>
<keyword id="KW-1185">Reference proteome</keyword>
<organism>
    <name type="scientific">Dictyostelium discoideum</name>
    <name type="common">Social amoeba</name>
    <dbReference type="NCBI Taxonomy" id="44689"/>
    <lineage>
        <taxon>Eukaryota</taxon>
        <taxon>Amoebozoa</taxon>
        <taxon>Evosea</taxon>
        <taxon>Eumycetozoa</taxon>
        <taxon>Dictyostelia</taxon>
        <taxon>Dictyosteliales</taxon>
        <taxon>Dictyosteliaceae</taxon>
        <taxon>Dictyostelium</taxon>
    </lineage>
</organism>
<dbReference type="EMBL" id="AAFI02000003">
    <property type="protein sequence ID" value="EAL73603.1"/>
    <property type="molecule type" value="Genomic_DNA"/>
</dbReference>
<dbReference type="RefSeq" id="XP_647183.1">
    <property type="nucleotide sequence ID" value="XM_642091.1"/>
</dbReference>
<dbReference type="PaxDb" id="44689-DDB0202099"/>
<dbReference type="EnsemblProtists" id="EAL73603">
    <property type="protein sequence ID" value="EAL73603"/>
    <property type="gene ID" value="DDB_G0268300"/>
</dbReference>
<dbReference type="GeneID" id="8615987"/>
<dbReference type="KEGG" id="ddi:DDB_G0268300"/>
<dbReference type="dictyBase" id="DDB_G0268300"/>
<dbReference type="VEuPathDB" id="AmoebaDB:DDB_G0268300"/>
<dbReference type="HOGENOM" id="CLU_2890457_0_0_1"/>
<dbReference type="InParanoid" id="Q55GK1"/>
<dbReference type="PRO" id="PR:Q55GK1"/>
<dbReference type="Proteomes" id="UP000002195">
    <property type="component" value="Chromosome 1"/>
</dbReference>
<protein>
    <recommendedName>
        <fullName>Putative uncharacterized protein DDB_G0268300</fullName>
    </recommendedName>
</protein>
<accession>Q55GK1</accession>
<gene>
    <name type="ORF">DDB_G0268300</name>
</gene>